<accession>A0RQI5</accession>
<gene>
    <name evidence="1" type="primary">rpoB</name>
    <name type="ordered locus">CFF8240_1316</name>
</gene>
<proteinExistence type="inferred from homology"/>
<protein>
    <recommendedName>
        <fullName evidence="1">DNA-directed RNA polymerase subunit beta</fullName>
        <shortName evidence="1">RNAP subunit beta</shortName>
        <ecNumber evidence="1">2.7.7.6</ecNumber>
    </recommendedName>
    <alternativeName>
        <fullName evidence="1">RNA polymerase subunit beta</fullName>
    </alternativeName>
    <alternativeName>
        <fullName evidence="1">Transcriptase subunit beta</fullName>
    </alternativeName>
</protein>
<reference key="1">
    <citation type="submission" date="2006-11" db="EMBL/GenBank/DDBJ databases">
        <title>Sequence of Campylobacter fetus subsp. fetus 82-40.</title>
        <authorList>
            <person name="Fouts D.E."/>
            <person name="Nelson K.E."/>
        </authorList>
    </citation>
    <scope>NUCLEOTIDE SEQUENCE [LARGE SCALE GENOMIC DNA]</scope>
    <source>
        <strain>82-40</strain>
    </source>
</reference>
<evidence type="ECO:0000255" key="1">
    <source>
        <dbReference type="HAMAP-Rule" id="MF_01321"/>
    </source>
</evidence>
<sequence length="1379" mass="156299">MLNSLYSGNRLRVDFSNVAKEIDVPNLLQLQKKSFDHFLNLDNSQTESGIEKVFKSIFPIHDPQNRLTLEYVSSEISKPRYTVRECMERGLTYCVNLKIKIRLIVHDRDEKTSEKVGVKDIKEQEIFVREIPLMTDRISFIINGVERVVVNQLHRSPGVIFKEEESPTVVNKLIYTAQIIPDRGSWLYFEYDTKDVLYVRINKRRKVPITILFRALGYKKQDIVKLFYPIQTLNIKNNKFLTMFNPDDFSGRVDYDIKDEDGNILHQAGKRLTKKKADKLIEDGLKFVEYPIEVLVNRYLASPVIDKESGEVIYDTLTQLDENKLAKIVAEQNSIEIANDLASGVDDAIINSFLQDYETLKLLKQTEGLEDENDLAAIRIYKVMRPGEPVVKEAARTFVNDLFFNPERYDLTKVGRMKMNHKLGLSVPEYVTVLTNEDIIKTAKYLIKVKNGQGYIDDRDHLGNRRIRSIGELLANELHLGFVKMQKAIRDKFTSLSNNVDELMPYDLVNPKMITTTIMEFFTGGQLSQFMDQTNPLSEVTHKRRLSALGEGGLVKERAGFEVRDVHPTHYGRICPVETPEGQNIGLINTLSTYAKVNDLGFVESPYRRVIDGKVTNEIVYLTATQEEGHIIAPASTVLDANDIIKEDLIEVRRDGEMLLAKREDVTLIDLCSGMVMGVAASLIPFLEHDDANRALMGSNMQRQAVPLLRSTAPIVGTGMEAIVARDAWEAIKAKRGGVIEKVDNRNIFILGEDENGPYIDQYTMEKNLRTNQNTTFSQHPIVKKGDMVKSGQIIADGSSMEKGELAIGKNALIAFMPWNGYNYEDAIVMSERMIRADAFTSVHIYEKEIEARELKDGVEEITRDIPNMKEEDLMHLDESGIVKIGTHIKPGMILVGKVSPKGEVKPTPEERLLRAIFGEKAGHVVNKSLYAGASLEGVVIDVKIFTKKGYEKDARSFKAYEDEKNILEKEHHDRLLMLDREEMLRVTALLSKNPLESELEIGKNSYKKGDKIKRSDLDNVNRFTLNTYVKCFSKEIQKTYEDMKAYFQNEKKKLKDEHDAKLEILEKDDILPSGVVKLVKVYLATKRKLKVGDKMAGRHGNKGIVSNIVPDVDMPYLPNGRTVDIVLNPLGVPSRMNIGQILESHLGLVGMKLGEQIEEIFENKKAEWIKELRAKMTEIADVSRLMDAKAILSKIDDDKLIDYARDWASGVRFATPIFEGVKADEFKKLFEMAKIDMDGKTELYDGRTGSKMAERVNVGCMYMLKLHHLVDEKVHARSTGPYSLVTQQPVGGKALSGGQRFGEMEVWALEAYGAAHTLREMLTVKSDDVEGRLAAYKALTRGENVPSTGIPETFFVLTNELKSLALDVEIYDEEENNE</sequence>
<feature type="chain" id="PRO_0000300294" description="DNA-directed RNA polymerase subunit beta">
    <location>
        <begin position="1"/>
        <end position="1379"/>
    </location>
</feature>
<keyword id="KW-0240">DNA-directed RNA polymerase</keyword>
<keyword id="KW-0548">Nucleotidyltransferase</keyword>
<keyword id="KW-0804">Transcription</keyword>
<keyword id="KW-0808">Transferase</keyword>
<name>RPOB_CAMFF</name>
<comment type="function">
    <text evidence="1">DNA-dependent RNA polymerase catalyzes the transcription of DNA into RNA using the four ribonucleoside triphosphates as substrates.</text>
</comment>
<comment type="catalytic activity">
    <reaction evidence="1">
        <text>RNA(n) + a ribonucleoside 5'-triphosphate = RNA(n+1) + diphosphate</text>
        <dbReference type="Rhea" id="RHEA:21248"/>
        <dbReference type="Rhea" id="RHEA-COMP:14527"/>
        <dbReference type="Rhea" id="RHEA-COMP:17342"/>
        <dbReference type="ChEBI" id="CHEBI:33019"/>
        <dbReference type="ChEBI" id="CHEBI:61557"/>
        <dbReference type="ChEBI" id="CHEBI:140395"/>
        <dbReference type="EC" id="2.7.7.6"/>
    </reaction>
</comment>
<comment type="subunit">
    <text evidence="1">The RNAP catalytic core consists of 2 alpha, 1 beta, 1 beta' and 1 omega subunit. When a sigma factor is associated with the core the holoenzyme is formed, which can initiate transcription.</text>
</comment>
<comment type="similarity">
    <text evidence="1">Belongs to the RNA polymerase beta chain family.</text>
</comment>
<dbReference type="EC" id="2.7.7.6" evidence="1"/>
<dbReference type="EMBL" id="CP000487">
    <property type="protein sequence ID" value="ABK83065.1"/>
    <property type="molecule type" value="Genomic_DNA"/>
</dbReference>
<dbReference type="RefSeq" id="WP_011732163.1">
    <property type="nucleotide sequence ID" value="NC_008599.1"/>
</dbReference>
<dbReference type="SMR" id="A0RQI5"/>
<dbReference type="GeneID" id="61065134"/>
<dbReference type="KEGG" id="cff:CFF8240_1316"/>
<dbReference type="PATRIC" id="fig|360106.6.peg.1286"/>
<dbReference type="eggNOG" id="COG0085">
    <property type="taxonomic scope" value="Bacteria"/>
</dbReference>
<dbReference type="HOGENOM" id="CLU_000524_4_0_7"/>
<dbReference type="Proteomes" id="UP000000760">
    <property type="component" value="Chromosome"/>
</dbReference>
<dbReference type="GO" id="GO:0000428">
    <property type="term" value="C:DNA-directed RNA polymerase complex"/>
    <property type="evidence" value="ECO:0007669"/>
    <property type="project" value="UniProtKB-KW"/>
</dbReference>
<dbReference type="GO" id="GO:0003677">
    <property type="term" value="F:DNA binding"/>
    <property type="evidence" value="ECO:0007669"/>
    <property type="project" value="UniProtKB-UniRule"/>
</dbReference>
<dbReference type="GO" id="GO:0003899">
    <property type="term" value="F:DNA-directed RNA polymerase activity"/>
    <property type="evidence" value="ECO:0007669"/>
    <property type="project" value="UniProtKB-UniRule"/>
</dbReference>
<dbReference type="GO" id="GO:0032549">
    <property type="term" value="F:ribonucleoside binding"/>
    <property type="evidence" value="ECO:0007669"/>
    <property type="project" value="InterPro"/>
</dbReference>
<dbReference type="GO" id="GO:0006351">
    <property type="term" value="P:DNA-templated transcription"/>
    <property type="evidence" value="ECO:0007669"/>
    <property type="project" value="UniProtKB-UniRule"/>
</dbReference>
<dbReference type="CDD" id="cd00653">
    <property type="entry name" value="RNA_pol_B_RPB2"/>
    <property type="match status" value="1"/>
</dbReference>
<dbReference type="Gene3D" id="2.40.50.100">
    <property type="match status" value="1"/>
</dbReference>
<dbReference type="Gene3D" id="2.40.50.150">
    <property type="match status" value="1"/>
</dbReference>
<dbReference type="Gene3D" id="3.90.1100.10">
    <property type="match status" value="2"/>
</dbReference>
<dbReference type="Gene3D" id="2.30.150.10">
    <property type="entry name" value="DNA-directed RNA polymerase, beta subunit, external 1 domain"/>
    <property type="match status" value="1"/>
</dbReference>
<dbReference type="Gene3D" id="2.40.270.10">
    <property type="entry name" value="DNA-directed RNA polymerase, subunit 2, domain 6"/>
    <property type="match status" value="1"/>
</dbReference>
<dbReference type="Gene3D" id="3.90.1800.10">
    <property type="entry name" value="RNA polymerase alpha subunit dimerisation domain"/>
    <property type="match status" value="1"/>
</dbReference>
<dbReference type="Gene3D" id="3.90.1110.10">
    <property type="entry name" value="RNA polymerase Rpb2, domain 2"/>
    <property type="match status" value="1"/>
</dbReference>
<dbReference type="HAMAP" id="MF_01321">
    <property type="entry name" value="RNApol_bact_RpoB"/>
    <property type="match status" value="1"/>
</dbReference>
<dbReference type="InterPro" id="IPR042107">
    <property type="entry name" value="DNA-dir_RNA_pol_bsu_ext_1_sf"/>
</dbReference>
<dbReference type="InterPro" id="IPR019462">
    <property type="entry name" value="DNA-dir_RNA_pol_bsu_external_1"/>
</dbReference>
<dbReference type="InterPro" id="IPR015712">
    <property type="entry name" value="DNA-dir_RNA_pol_su2"/>
</dbReference>
<dbReference type="InterPro" id="IPR007120">
    <property type="entry name" value="DNA-dir_RNAP_su2_dom"/>
</dbReference>
<dbReference type="InterPro" id="IPR037033">
    <property type="entry name" value="DNA-dir_RNAP_su2_hyb_sf"/>
</dbReference>
<dbReference type="InterPro" id="IPR010243">
    <property type="entry name" value="RNA_pol_bsu_bac"/>
</dbReference>
<dbReference type="InterPro" id="IPR007121">
    <property type="entry name" value="RNA_pol_bsu_CS"/>
</dbReference>
<dbReference type="InterPro" id="IPR007644">
    <property type="entry name" value="RNA_pol_bsu_protrusion"/>
</dbReference>
<dbReference type="InterPro" id="IPR007642">
    <property type="entry name" value="RNA_pol_Rpb2_2"/>
</dbReference>
<dbReference type="InterPro" id="IPR037034">
    <property type="entry name" value="RNA_pol_Rpb2_2_sf"/>
</dbReference>
<dbReference type="InterPro" id="IPR007645">
    <property type="entry name" value="RNA_pol_Rpb2_3"/>
</dbReference>
<dbReference type="InterPro" id="IPR007641">
    <property type="entry name" value="RNA_pol_Rpb2_7"/>
</dbReference>
<dbReference type="InterPro" id="IPR014724">
    <property type="entry name" value="RNA_pol_RPB2_OB-fold"/>
</dbReference>
<dbReference type="NCBIfam" id="NF001616">
    <property type="entry name" value="PRK00405.1"/>
    <property type="match status" value="1"/>
</dbReference>
<dbReference type="NCBIfam" id="TIGR02013">
    <property type="entry name" value="rpoB"/>
    <property type="match status" value="1"/>
</dbReference>
<dbReference type="PANTHER" id="PTHR20856">
    <property type="entry name" value="DNA-DIRECTED RNA POLYMERASE I SUBUNIT 2"/>
    <property type="match status" value="1"/>
</dbReference>
<dbReference type="Pfam" id="PF04563">
    <property type="entry name" value="RNA_pol_Rpb2_1"/>
    <property type="match status" value="1"/>
</dbReference>
<dbReference type="Pfam" id="PF04561">
    <property type="entry name" value="RNA_pol_Rpb2_2"/>
    <property type="match status" value="2"/>
</dbReference>
<dbReference type="Pfam" id="PF04565">
    <property type="entry name" value="RNA_pol_Rpb2_3"/>
    <property type="match status" value="1"/>
</dbReference>
<dbReference type="Pfam" id="PF10385">
    <property type="entry name" value="RNA_pol_Rpb2_45"/>
    <property type="match status" value="1"/>
</dbReference>
<dbReference type="Pfam" id="PF00562">
    <property type="entry name" value="RNA_pol_Rpb2_6"/>
    <property type="match status" value="1"/>
</dbReference>
<dbReference type="Pfam" id="PF04560">
    <property type="entry name" value="RNA_pol_Rpb2_7"/>
    <property type="match status" value="1"/>
</dbReference>
<dbReference type="SUPFAM" id="SSF64484">
    <property type="entry name" value="beta and beta-prime subunits of DNA dependent RNA-polymerase"/>
    <property type="match status" value="1"/>
</dbReference>
<dbReference type="PROSITE" id="PS01166">
    <property type="entry name" value="RNA_POL_BETA"/>
    <property type="match status" value="1"/>
</dbReference>
<organism>
    <name type="scientific">Campylobacter fetus subsp. fetus (strain 82-40)</name>
    <dbReference type="NCBI Taxonomy" id="360106"/>
    <lineage>
        <taxon>Bacteria</taxon>
        <taxon>Pseudomonadati</taxon>
        <taxon>Campylobacterota</taxon>
        <taxon>Epsilonproteobacteria</taxon>
        <taxon>Campylobacterales</taxon>
        <taxon>Campylobacteraceae</taxon>
        <taxon>Campylobacter</taxon>
    </lineage>
</organism>